<reference evidence="5" key="1">
    <citation type="submission" date="2006-08" db="UniProtKB">
        <title>Dermaseptins and phylloseptins from Phyllomedusa tarsius (Amphibia).</title>
        <authorList>
            <person name="Prates M.V."/>
            <person name="Jardim D.P."/>
            <person name="Silva L.P."/>
            <person name="Gordo M."/>
            <person name="Leite J.R.S.A."/>
            <person name="Figueredo R.C.R."/>
            <person name="Amaral A.C."/>
            <person name="Felipe M.S.S."/>
            <person name="Bloch C. Jr."/>
        </authorList>
    </citation>
    <scope>PROTEIN SEQUENCE</scope>
    <scope>SUBCELLULAR LOCATION</scope>
    <scope>TISSUE SPECIFICITY</scope>
    <scope>MASS SPECTROMETRY</scope>
    <scope>AMIDATION AT LEU-19</scope>
    <source>
        <tissue evidence="3">Skin secretion</tissue>
    </source>
</reference>
<dbReference type="GO" id="GO:0005576">
    <property type="term" value="C:extracellular region"/>
    <property type="evidence" value="ECO:0007669"/>
    <property type="project" value="UniProtKB-SubCell"/>
</dbReference>
<dbReference type="GO" id="GO:0006952">
    <property type="term" value="P:defense response"/>
    <property type="evidence" value="ECO:0007669"/>
    <property type="project" value="UniProtKB-KW"/>
</dbReference>
<proteinExistence type="evidence at protein level"/>
<evidence type="ECO:0000250" key="1">
    <source>
        <dbReference type="UniProtKB" id="Q17UY9"/>
    </source>
</evidence>
<evidence type="ECO:0000255" key="2"/>
<evidence type="ECO:0000269" key="3">
    <source ref="1"/>
</evidence>
<evidence type="ECO:0000303" key="4">
    <source ref="1"/>
</evidence>
<evidence type="ECO:0000305" key="5"/>
<keyword id="KW-0027">Amidation</keyword>
<keyword id="KW-0878">Amphibian defense peptide</keyword>
<keyword id="KW-0929">Antimicrobial</keyword>
<keyword id="KW-0903">Direct protein sequencing</keyword>
<keyword id="KW-0964">Secreted</keyword>
<comment type="function">
    <text evidence="1">Antimicrobial peptide.</text>
</comment>
<comment type="subcellular location">
    <subcellularLocation>
        <location evidence="3">Secreted</location>
    </subcellularLocation>
</comment>
<comment type="tissue specificity">
    <text evidence="3">Expressed by the skin glands.</text>
</comment>
<comment type="mass spectrometry" mass="2049.19" error="0.1" method="MALDI" evidence="3"/>
<comment type="similarity">
    <text evidence="2">Belongs to the frog skin active peptide (FSAP) family. Phylloseptin subfamily.</text>
</comment>
<comment type="online information" name="The antimicrobial peptide database">
    <link uri="https://wangapd3.com/database/query_output.php?ID=02992"/>
</comment>
<sequence length="19" mass="2051">FFSMIPKIATGIASLVKNL</sequence>
<feature type="peptide" id="PRO_0000376047" description="Phylloseptin-3" evidence="3">
    <location>
        <begin position="1"/>
        <end position="19"/>
    </location>
</feature>
<feature type="modified residue" description="Leucine amide" evidence="3">
    <location>
        <position position="19"/>
    </location>
</feature>
<name>PLS3_PHYTS</name>
<protein>
    <recommendedName>
        <fullName evidence="4">Phylloseptin-3</fullName>
        <shortName evidence="4">PStar 03</shortName>
    </recommendedName>
</protein>
<organism>
    <name type="scientific">Phyllomedusa tarsius</name>
    <name type="common">Brownbelly leaf frog</name>
    <name type="synonym">Phyllomedusa tarsia</name>
    <dbReference type="NCBI Taxonomy" id="306084"/>
    <lineage>
        <taxon>Eukaryota</taxon>
        <taxon>Metazoa</taxon>
        <taxon>Chordata</taxon>
        <taxon>Craniata</taxon>
        <taxon>Vertebrata</taxon>
        <taxon>Euteleostomi</taxon>
        <taxon>Amphibia</taxon>
        <taxon>Batrachia</taxon>
        <taxon>Anura</taxon>
        <taxon>Neobatrachia</taxon>
        <taxon>Hyloidea</taxon>
        <taxon>Hylidae</taxon>
        <taxon>Phyllomedusinae</taxon>
        <taxon>Phyllomedusa</taxon>
    </lineage>
</organism>
<accession>P84931</accession>